<accession>E5Y8P9</accession>
<feature type="chain" id="PRO_0000459626" description="Sulfoacetaldehyde dehydrogenase (acylating)">
    <location>
        <begin position="1"/>
        <end position="464"/>
    </location>
</feature>
<feature type="active site" description="Nucleophile" evidence="1">
    <location>
        <position position="241"/>
    </location>
</feature>
<reference key="1">
    <citation type="submission" date="2013-04" db="EMBL/GenBank/DDBJ databases">
        <title>The Genome Sequence of Bilophila wadsworthia 3_1_6.</title>
        <authorList>
            <consortium name="The Broad Institute Genomics Platform"/>
            <person name="Earl A."/>
            <person name="Ward D."/>
            <person name="Feldgarden M."/>
            <person name="Gevers D."/>
            <person name="Sibley C."/>
            <person name="Strauss J."/>
            <person name="Allen-Vercoe E."/>
            <person name="Walker B."/>
            <person name="Young S."/>
            <person name="Zeng Q."/>
            <person name="Gargeya S."/>
            <person name="Fitzgerald M."/>
            <person name="Haas B."/>
            <person name="Abouelleil A."/>
            <person name="Allen A.W."/>
            <person name="Alvarado L."/>
            <person name="Arachchi H.M."/>
            <person name="Berlin A.M."/>
            <person name="Chapman S.B."/>
            <person name="Gainer-Dewar J."/>
            <person name="Goldberg J."/>
            <person name="Griggs A."/>
            <person name="Gujja S."/>
            <person name="Hansen M."/>
            <person name="Howarth C."/>
            <person name="Imamovic A."/>
            <person name="Ireland A."/>
            <person name="Larimer J."/>
            <person name="McCowan C."/>
            <person name="Murphy C."/>
            <person name="Pearson M."/>
            <person name="Poon T.W."/>
            <person name="Priest M."/>
            <person name="Roberts A."/>
            <person name="Saif S."/>
            <person name="Shea T."/>
            <person name="Sisk P."/>
            <person name="Sykes S."/>
            <person name="Wortman J."/>
            <person name="Nusbaum C."/>
            <person name="Birren B."/>
        </authorList>
    </citation>
    <scope>NUCLEOTIDE SEQUENCE [LARGE SCALE GENOMIC DNA]</scope>
    <source>
        <strain>3_1_6</strain>
    </source>
</reference>
<reference key="2">
    <citation type="journal article" date="2023" name="J. Biol. Chem.">
        <title>Isethionate is an intermediate in the degradation of sulfoacetate by the human gut pathobiont Bilophila wadsworthia.</title>
        <authorList>
            <person name="Liu X."/>
            <person name="Wei Y."/>
            <person name="Zhang J."/>
            <person name="Zhou Y."/>
            <person name="Du Y."/>
            <person name="Zhang Y."/>
        </authorList>
    </citation>
    <scope>FUNCTION</scope>
    <scope>CATALYTIC ACTIVITY</scope>
    <scope>BIOPHYSICOCHEMICAL PROPERTIES</scope>
    <scope>INDUCTION</scope>
    <source>
        <strain>3_1_6</strain>
    </source>
</reference>
<dbReference type="EC" id="1.2.1.81" evidence="2"/>
<dbReference type="EMBL" id="ADCP02000001">
    <property type="protein sequence ID" value="EFV43628.1"/>
    <property type="molecule type" value="Genomic_DNA"/>
</dbReference>
<dbReference type="RefSeq" id="WP_005028464.1">
    <property type="nucleotide sequence ID" value="NZ_KE150238.1"/>
</dbReference>
<dbReference type="SMR" id="E5Y8P9"/>
<dbReference type="STRING" id="563192.HMPREF0179_02567"/>
<dbReference type="GeneID" id="78085696"/>
<dbReference type="eggNOG" id="COG1012">
    <property type="taxonomic scope" value="Bacteria"/>
</dbReference>
<dbReference type="HOGENOM" id="CLU_028794_3_0_7"/>
<dbReference type="OrthoDB" id="9815791at2"/>
<dbReference type="Proteomes" id="UP000006034">
    <property type="component" value="Unassembled WGS sequence"/>
</dbReference>
<dbReference type="GO" id="GO:0016620">
    <property type="term" value="F:oxidoreductase activity, acting on the aldehyde or oxo group of donors, NAD or NADP as acceptor"/>
    <property type="evidence" value="ECO:0007669"/>
    <property type="project" value="InterPro"/>
</dbReference>
<dbReference type="CDD" id="cd07122">
    <property type="entry name" value="ALDH_F20_ACDH"/>
    <property type="match status" value="1"/>
</dbReference>
<dbReference type="Gene3D" id="3.40.605.10">
    <property type="entry name" value="Aldehyde Dehydrogenase, Chain A, domain 1"/>
    <property type="match status" value="1"/>
</dbReference>
<dbReference type="Gene3D" id="3.40.309.10">
    <property type="entry name" value="Aldehyde Dehydrogenase, Chain A, domain 2"/>
    <property type="match status" value="1"/>
</dbReference>
<dbReference type="InterPro" id="IPR016161">
    <property type="entry name" value="Ald_DH/histidinol_DH"/>
</dbReference>
<dbReference type="InterPro" id="IPR016163">
    <property type="entry name" value="Ald_DH_C"/>
</dbReference>
<dbReference type="InterPro" id="IPR016162">
    <property type="entry name" value="Ald_DH_N"/>
</dbReference>
<dbReference type="InterPro" id="IPR015590">
    <property type="entry name" value="Aldehyde_DH_dom"/>
</dbReference>
<dbReference type="PANTHER" id="PTHR11699">
    <property type="entry name" value="ALDEHYDE DEHYDROGENASE-RELATED"/>
    <property type="match status" value="1"/>
</dbReference>
<dbReference type="Pfam" id="PF00171">
    <property type="entry name" value="Aldedh"/>
    <property type="match status" value="1"/>
</dbReference>
<dbReference type="SUPFAM" id="SSF53720">
    <property type="entry name" value="ALDH-like"/>
    <property type="match status" value="1"/>
</dbReference>
<protein>
    <recommendedName>
        <fullName evidence="4">Sulfoacetaldehyde dehydrogenase (acylating)</fullName>
        <ecNumber evidence="2">1.2.1.81</ecNumber>
    </recommendedName>
    <alternativeName>
        <fullName evidence="3">NADPH-dependent acylating sulfoacetaldehyde dehydrogenase</fullName>
    </alternativeName>
    <alternativeName>
        <fullName evidence="3">Sulfoacetyl-CoA reductase</fullName>
    </alternativeName>
</protein>
<name>SAUS_BILW3</name>
<comment type="function">
    <text evidence="2">Involved in the degradation of sulfoacetate (PubMed:37414148). Catalyzes the conversion of sulfoacetyl-CoA and NADPH to sulfoacetaldehyde, CoA and NADP(+) (PubMed:37414148). A much lower level of activity (1%) is observed when NADP(+) is replaced with NAD(+) (PubMed:37414148).</text>
</comment>
<comment type="catalytic activity">
    <reaction evidence="2">
        <text>sulfoacetaldehyde + NADP(+) + CoA = sulfoacetyl-CoA + NADPH + H(+)</text>
        <dbReference type="Rhea" id="RHEA:29595"/>
        <dbReference type="ChEBI" id="CHEBI:15378"/>
        <dbReference type="ChEBI" id="CHEBI:57287"/>
        <dbReference type="ChEBI" id="CHEBI:57783"/>
        <dbReference type="ChEBI" id="CHEBI:58246"/>
        <dbReference type="ChEBI" id="CHEBI:58349"/>
        <dbReference type="ChEBI" id="CHEBI:61994"/>
        <dbReference type="EC" id="1.2.1.81"/>
    </reaction>
    <physiologicalReaction direction="right-to-left" evidence="2">
        <dbReference type="Rhea" id="RHEA:29597"/>
    </physiologicalReaction>
</comment>
<comment type="biophysicochemical properties">
    <kinetics>
        <KM evidence="2">0.8 mM for sulfoacetaldehyde</KM>
        <KM evidence="2">0.06 mM for CoA</KM>
        <KM evidence="2">0.68 mM for NADP(+)</KM>
        <text evidence="2">kcat is 54.76 sec(-1) with sulfoacetaldehyde as substrate. kcat is 33.8 sec(-1) with CoA as substrate. kcat is 38.9 sec(-1) with NADP(+) as substrate.</text>
    </kinetics>
    <phDependence>
        <text evidence="2">Optimum pH is 9.5.</text>
    </phDependence>
</comment>
<comment type="induction">
    <text evidence="2">Induced in sulfoacetate-grown cells but not in thiosulfate-grown cells.</text>
</comment>
<comment type="similarity">
    <text evidence="4">Belongs to the aldehyde dehydrogenase family.</text>
</comment>
<gene>
    <name evidence="3" type="primary">sauS</name>
    <name evidence="5" type="ORF">HMPREF0179_02567</name>
</gene>
<evidence type="ECO:0000250" key="1">
    <source>
        <dbReference type="UniProtKB" id="Q9HTJ1"/>
    </source>
</evidence>
<evidence type="ECO:0000269" key="2">
    <source>
    </source>
</evidence>
<evidence type="ECO:0000303" key="3">
    <source>
    </source>
</evidence>
<evidence type="ECO:0000305" key="4"/>
<evidence type="ECO:0000312" key="5">
    <source>
        <dbReference type="EMBL" id="EFV43628.1"/>
    </source>
</evidence>
<keyword id="KW-0521">NADP</keyword>
<keyword id="KW-0560">Oxidoreductase</keyword>
<keyword id="KW-1185">Reference proteome</keyword>
<organism>
    <name type="scientific">Bilophila wadsworthia (strain 3_1_6)</name>
    <dbReference type="NCBI Taxonomy" id="563192"/>
    <lineage>
        <taxon>Bacteria</taxon>
        <taxon>Pseudomonadati</taxon>
        <taxon>Thermodesulfobacteriota</taxon>
        <taxon>Desulfovibrionia</taxon>
        <taxon>Desulfovibrionales</taxon>
        <taxon>Desulfovibrionaceae</taxon>
        <taxon>Bilophila</taxon>
    </lineage>
</organism>
<sequence length="464" mass="50535">MKTVSEQMELARKAQAIVNDYTQEQIDEICLAIGWEVYEDENIAKLAKMAVEETGYGNVQSKIIKHKRKVGGVLHDIKGAKSVGLIERNEETGISKYAKPVGVVCAILPATNPTATCGGKAVGILKGRNAVIFKPSSRALKSTTEAINMMRAGLRKVGAPEDLIQVLEDPSREAITELMKVSDLIVATGSGQVVRAAYSSGTPAYGVGQGNACAIVAEDADVAEAAKMICGSKLFDYATSCSSENAVIPVEAVYDQFMAEMKKNGCYLVTGEDREKLKNHMWKPNAKGKIALNPDIIAKSAQVIADGAGISIPEGTDILLVEGMEPILGDKFHDEKISPVLTVYKAKDFKDAYRILVELTNLVGRGHSCGIHTYKHEYIEFLGEHMKSSRITVRQSMSAGNGGHPFNRMPSTATLGCGTWGGNSTTENVHWRHFINVTWVNEPVAPWTFTDEDMWGDFWKKYGK</sequence>
<proteinExistence type="evidence at protein level"/>